<dbReference type="EC" id="4.2.1.10" evidence="1"/>
<dbReference type="EMBL" id="AM902716">
    <property type="protein sequence ID" value="CAP40905.1"/>
    <property type="molecule type" value="Genomic_DNA"/>
</dbReference>
<dbReference type="SMR" id="A9I1W8"/>
<dbReference type="STRING" id="94624.Bpet0573"/>
<dbReference type="KEGG" id="bpt:Bpet0573"/>
<dbReference type="eggNOG" id="COG0757">
    <property type="taxonomic scope" value="Bacteria"/>
</dbReference>
<dbReference type="UniPathway" id="UPA00053">
    <property type="reaction ID" value="UER00086"/>
</dbReference>
<dbReference type="Proteomes" id="UP000001225">
    <property type="component" value="Chromosome"/>
</dbReference>
<dbReference type="GO" id="GO:0003855">
    <property type="term" value="F:3-dehydroquinate dehydratase activity"/>
    <property type="evidence" value="ECO:0007669"/>
    <property type="project" value="UniProtKB-UniRule"/>
</dbReference>
<dbReference type="GO" id="GO:0008652">
    <property type="term" value="P:amino acid biosynthetic process"/>
    <property type="evidence" value="ECO:0007669"/>
    <property type="project" value="UniProtKB-KW"/>
</dbReference>
<dbReference type="GO" id="GO:0009073">
    <property type="term" value="P:aromatic amino acid family biosynthetic process"/>
    <property type="evidence" value="ECO:0007669"/>
    <property type="project" value="UniProtKB-KW"/>
</dbReference>
<dbReference type="GO" id="GO:0009423">
    <property type="term" value="P:chorismate biosynthetic process"/>
    <property type="evidence" value="ECO:0007669"/>
    <property type="project" value="UniProtKB-UniRule"/>
</dbReference>
<dbReference type="GO" id="GO:0019631">
    <property type="term" value="P:quinate catabolic process"/>
    <property type="evidence" value="ECO:0007669"/>
    <property type="project" value="TreeGrafter"/>
</dbReference>
<dbReference type="CDD" id="cd00466">
    <property type="entry name" value="DHQase_II"/>
    <property type="match status" value="1"/>
</dbReference>
<dbReference type="Gene3D" id="3.40.50.9100">
    <property type="entry name" value="Dehydroquinase, class II"/>
    <property type="match status" value="1"/>
</dbReference>
<dbReference type="HAMAP" id="MF_00169">
    <property type="entry name" value="AroQ"/>
    <property type="match status" value="1"/>
</dbReference>
<dbReference type="InterPro" id="IPR001874">
    <property type="entry name" value="DHquinase_II"/>
</dbReference>
<dbReference type="InterPro" id="IPR018509">
    <property type="entry name" value="DHquinase_II_CS"/>
</dbReference>
<dbReference type="InterPro" id="IPR036441">
    <property type="entry name" value="DHquinase_II_sf"/>
</dbReference>
<dbReference type="NCBIfam" id="TIGR01088">
    <property type="entry name" value="aroQ"/>
    <property type="match status" value="1"/>
</dbReference>
<dbReference type="NCBIfam" id="NF003804">
    <property type="entry name" value="PRK05395.1-1"/>
    <property type="match status" value="1"/>
</dbReference>
<dbReference type="NCBIfam" id="NF003805">
    <property type="entry name" value="PRK05395.1-2"/>
    <property type="match status" value="1"/>
</dbReference>
<dbReference type="NCBIfam" id="NF003806">
    <property type="entry name" value="PRK05395.1-3"/>
    <property type="match status" value="1"/>
</dbReference>
<dbReference type="NCBIfam" id="NF003807">
    <property type="entry name" value="PRK05395.1-4"/>
    <property type="match status" value="1"/>
</dbReference>
<dbReference type="PANTHER" id="PTHR21272">
    <property type="entry name" value="CATABOLIC 3-DEHYDROQUINASE"/>
    <property type="match status" value="1"/>
</dbReference>
<dbReference type="PANTHER" id="PTHR21272:SF3">
    <property type="entry name" value="CATABOLIC 3-DEHYDROQUINASE"/>
    <property type="match status" value="1"/>
</dbReference>
<dbReference type="Pfam" id="PF01220">
    <property type="entry name" value="DHquinase_II"/>
    <property type="match status" value="1"/>
</dbReference>
<dbReference type="PIRSF" id="PIRSF001399">
    <property type="entry name" value="DHquinase_II"/>
    <property type="match status" value="1"/>
</dbReference>
<dbReference type="SUPFAM" id="SSF52304">
    <property type="entry name" value="Type II 3-dehydroquinate dehydratase"/>
    <property type="match status" value="1"/>
</dbReference>
<dbReference type="PROSITE" id="PS01029">
    <property type="entry name" value="DEHYDROQUINASE_II"/>
    <property type="match status" value="1"/>
</dbReference>
<organism>
    <name type="scientific">Bordetella petrii (strain ATCC BAA-461 / DSM 12804 / CCUG 43448)</name>
    <dbReference type="NCBI Taxonomy" id="340100"/>
    <lineage>
        <taxon>Bacteria</taxon>
        <taxon>Pseudomonadati</taxon>
        <taxon>Pseudomonadota</taxon>
        <taxon>Betaproteobacteria</taxon>
        <taxon>Burkholderiales</taxon>
        <taxon>Alcaligenaceae</taxon>
        <taxon>Bordetella</taxon>
    </lineage>
</organism>
<gene>
    <name evidence="1" type="primary">aroQ</name>
    <name type="ordered locus">Bpet0573</name>
</gene>
<evidence type="ECO:0000255" key="1">
    <source>
        <dbReference type="HAMAP-Rule" id="MF_00169"/>
    </source>
</evidence>
<name>AROQ_BORPD</name>
<reference key="1">
    <citation type="journal article" date="2008" name="BMC Genomics">
        <title>The missing link: Bordetella petrii is endowed with both the metabolic versatility of environmental bacteria and virulence traits of pathogenic Bordetellae.</title>
        <authorList>
            <person name="Gross R."/>
            <person name="Guzman C.A."/>
            <person name="Sebaihia M."/>
            <person name="Martin dos Santos V.A.P."/>
            <person name="Pieper D.H."/>
            <person name="Koebnik R."/>
            <person name="Lechner M."/>
            <person name="Bartels D."/>
            <person name="Buhrmester J."/>
            <person name="Choudhuri J.V."/>
            <person name="Ebensen T."/>
            <person name="Gaigalat L."/>
            <person name="Herrmann S."/>
            <person name="Khachane A.N."/>
            <person name="Larisch C."/>
            <person name="Link S."/>
            <person name="Linke B."/>
            <person name="Meyer F."/>
            <person name="Mormann S."/>
            <person name="Nakunst D."/>
            <person name="Rueckert C."/>
            <person name="Schneiker-Bekel S."/>
            <person name="Schulze K."/>
            <person name="Voerholter F.-J."/>
            <person name="Yevsa T."/>
            <person name="Engle J.T."/>
            <person name="Goldman W.E."/>
            <person name="Puehler A."/>
            <person name="Goebel U.B."/>
            <person name="Goesmann A."/>
            <person name="Bloecker H."/>
            <person name="Kaiser O."/>
            <person name="Martinez-Arias R."/>
        </authorList>
    </citation>
    <scope>NUCLEOTIDE SEQUENCE [LARGE SCALE GENOMIC DNA]</scope>
    <source>
        <strain>ATCC BAA-461 / DSM 12804 / CCUG 43448</strain>
    </source>
</reference>
<keyword id="KW-0028">Amino-acid biosynthesis</keyword>
<keyword id="KW-0057">Aromatic amino acid biosynthesis</keyword>
<keyword id="KW-0456">Lyase</keyword>
<feature type="chain" id="PRO_1000097593" description="3-dehydroquinate dehydratase">
    <location>
        <begin position="1"/>
        <end position="144"/>
    </location>
</feature>
<feature type="active site" description="Proton acceptor" evidence="1">
    <location>
        <position position="24"/>
    </location>
</feature>
<feature type="active site" description="Proton donor" evidence="1">
    <location>
        <position position="102"/>
    </location>
</feature>
<feature type="binding site" evidence="1">
    <location>
        <position position="76"/>
    </location>
    <ligand>
        <name>substrate</name>
    </ligand>
</feature>
<feature type="binding site" evidence="1">
    <location>
        <position position="82"/>
    </location>
    <ligand>
        <name>substrate</name>
    </ligand>
</feature>
<feature type="binding site" evidence="1">
    <location>
        <position position="89"/>
    </location>
    <ligand>
        <name>substrate</name>
    </ligand>
</feature>
<feature type="binding site" evidence="1">
    <location>
        <begin position="103"/>
        <end position="104"/>
    </location>
    <ligand>
        <name>substrate</name>
    </ligand>
</feature>
<feature type="binding site" evidence="1">
    <location>
        <position position="113"/>
    </location>
    <ligand>
        <name>substrate</name>
    </ligand>
</feature>
<feature type="site" description="Transition state stabilizer" evidence="1">
    <location>
        <position position="19"/>
    </location>
</feature>
<accession>A9I1W8</accession>
<protein>
    <recommendedName>
        <fullName evidence="1">3-dehydroquinate dehydratase</fullName>
        <shortName evidence="1">3-dehydroquinase</shortName>
        <ecNumber evidence="1">4.2.1.10</ecNumber>
    </recommendedName>
    <alternativeName>
        <fullName evidence="1">Type II DHQase</fullName>
    </alternativeName>
</protein>
<sequence>MAQQILVLHGPNLNLLGSREPHLYGSLTLAQINQGLETLAAQLGVGLTAWQSNHEGALVERIQAARQDGTDFIIINAAAYTHTSVAVRDALAAVAIPFIEVHLSNLYKREPFRQHSYLSDLAVGLVCGLGADGYEAAVRYAARH</sequence>
<proteinExistence type="inferred from homology"/>
<comment type="function">
    <text evidence="1">Catalyzes a trans-dehydration via an enolate intermediate.</text>
</comment>
<comment type="catalytic activity">
    <reaction evidence="1">
        <text>3-dehydroquinate = 3-dehydroshikimate + H2O</text>
        <dbReference type="Rhea" id="RHEA:21096"/>
        <dbReference type="ChEBI" id="CHEBI:15377"/>
        <dbReference type="ChEBI" id="CHEBI:16630"/>
        <dbReference type="ChEBI" id="CHEBI:32364"/>
        <dbReference type="EC" id="4.2.1.10"/>
    </reaction>
</comment>
<comment type="pathway">
    <text evidence="1">Metabolic intermediate biosynthesis; chorismate biosynthesis; chorismate from D-erythrose 4-phosphate and phosphoenolpyruvate: step 3/7.</text>
</comment>
<comment type="subunit">
    <text evidence="1">Homododecamer.</text>
</comment>
<comment type="similarity">
    <text evidence="1">Belongs to the type-II 3-dehydroquinase family.</text>
</comment>